<comment type="function">
    <text evidence="1">Catalyzes the synthesis of the hydroxymethylpyrimidine phosphate (HMP-P) moiety of thiamine from aminoimidazole ribotide (AIR) in a radical S-adenosyl-L-methionine (SAM)-dependent reaction.</text>
</comment>
<comment type="catalytic activity">
    <reaction evidence="1">
        <text>5-amino-1-(5-phospho-beta-D-ribosyl)imidazole + S-adenosyl-L-methionine = 4-amino-2-methyl-5-(phosphooxymethyl)pyrimidine + CO + 5'-deoxyadenosine + formate + L-methionine + 3 H(+)</text>
        <dbReference type="Rhea" id="RHEA:24840"/>
        <dbReference type="ChEBI" id="CHEBI:15378"/>
        <dbReference type="ChEBI" id="CHEBI:15740"/>
        <dbReference type="ChEBI" id="CHEBI:17245"/>
        <dbReference type="ChEBI" id="CHEBI:17319"/>
        <dbReference type="ChEBI" id="CHEBI:57844"/>
        <dbReference type="ChEBI" id="CHEBI:58354"/>
        <dbReference type="ChEBI" id="CHEBI:59789"/>
        <dbReference type="ChEBI" id="CHEBI:137981"/>
        <dbReference type="EC" id="4.1.99.17"/>
    </reaction>
</comment>
<comment type="cofactor">
    <cofactor evidence="1">
        <name>[4Fe-4S] cluster</name>
        <dbReference type="ChEBI" id="CHEBI:49883"/>
    </cofactor>
    <text evidence="1">Binds 1 [4Fe-4S] cluster per subunit. The cluster is coordinated with 3 cysteines and an exchangeable S-adenosyl-L-methionine.</text>
</comment>
<comment type="pathway">
    <text evidence="1">Cofactor biosynthesis; thiamine diphosphate biosynthesis.</text>
</comment>
<comment type="subunit">
    <text evidence="1">Homodimer.</text>
</comment>
<comment type="similarity">
    <text evidence="1">Belongs to the ThiC family.</text>
</comment>
<reference key="1">
    <citation type="journal article" date="2008" name="BMC Genomics">
        <title>The genome sequence of the fish pathogen Aliivibrio salmonicida strain LFI1238 shows extensive evidence of gene decay.</title>
        <authorList>
            <person name="Hjerde E."/>
            <person name="Lorentzen M.S."/>
            <person name="Holden M.T."/>
            <person name="Seeger K."/>
            <person name="Paulsen S."/>
            <person name="Bason N."/>
            <person name="Churcher C."/>
            <person name="Harris D."/>
            <person name="Norbertczak H."/>
            <person name="Quail M.A."/>
            <person name="Sanders S."/>
            <person name="Thurston S."/>
            <person name="Parkhill J."/>
            <person name="Willassen N.P."/>
            <person name="Thomson N.R."/>
        </authorList>
    </citation>
    <scope>NUCLEOTIDE SEQUENCE [LARGE SCALE GENOMIC DNA]</scope>
    <source>
        <strain>LFI1238</strain>
    </source>
</reference>
<gene>
    <name evidence="1" type="primary">thiC</name>
    <name type="ordered locus">VSAL_I2983</name>
</gene>
<sequence length="648" mass="72712">MSSSRKQARLDAKSNIESLSVQPYPNSKKIYIDGSRPDIRVPMREISLADSLVGGTKENPTLIPNEPIQVYDTSGVYTDPNYDIDVYQGLPKLRERWIEDRTDTEMLKGVSSVYSQERLSDETLDELRYGNLPTIRRAKKGQCVTQLHYARQGIITPEMEYIAIRENMGRQKFADEQLNHQHPGHSFGANLPKEITPEFVRNEVAEGRAIIPANINHPEAEPMIIGRNFLIKVNANIGNSSVSSSIEEEVEKLVWSTRWGGDTVMDLSTGRNIHETREWILRNSPVPIGTVPMYQALEKVNGVAENLNWEVMRDTLIEQAEQGVDYFTIHAGLLLRYVPMTAKRVTGIVSRGGSIIAKWCLAHHQESFLYTHFREICEICAKYDVSLSLGDGLRPGSIADANDEAQFAELRTLGELTKVAWEYDVQVIIEGPGHVPMHMIKENMDEQLKHCHEAPFYTLGPLTTDIAPGYDHITSGIGAAMIGWYGCAMLCYVTPKEHLGLPNKEDVKIGLITYKLAAHAGDLAKGHPGAQIRDNALSKARFEFRWEDQFNLSLDPITAREFHDETLPQESGKVAHFCSMCGPKFCSMKISQEVREYAKDTEQVALDQAINIKMLDDPLEGMRQKSAEFKASGSELYHPAVDAEPVKS</sequence>
<name>THIC_ALISL</name>
<accession>B6EGV1</accession>
<evidence type="ECO:0000255" key="1">
    <source>
        <dbReference type="HAMAP-Rule" id="MF_00089"/>
    </source>
</evidence>
<organism>
    <name type="scientific">Aliivibrio salmonicida (strain LFI1238)</name>
    <name type="common">Vibrio salmonicida (strain LFI1238)</name>
    <dbReference type="NCBI Taxonomy" id="316275"/>
    <lineage>
        <taxon>Bacteria</taxon>
        <taxon>Pseudomonadati</taxon>
        <taxon>Pseudomonadota</taxon>
        <taxon>Gammaproteobacteria</taxon>
        <taxon>Vibrionales</taxon>
        <taxon>Vibrionaceae</taxon>
        <taxon>Aliivibrio</taxon>
    </lineage>
</organism>
<dbReference type="EC" id="4.1.99.17" evidence="1"/>
<dbReference type="EMBL" id="FM178379">
    <property type="protein sequence ID" value="CAQ80667.1"/>
    <property type="molecule type" value="Genomic_DNA"/>
</dbReference>
<dbReference type="RefSeq" id="WP_012551384.1">
    <property type="nucleotide sequence ID" value="NC_011312.1"/>
</dbReference>
<dbReference type="SMR" id="B6EGV1"/>
<dbReference type="KEGG" id="vsa:VSAL_I2983"/>
<dbReference type="eggNOG" id="COG0422">
    <property type="taxonomic scope" value="Bacteria"/>
</dbReference>
<dbReference type="HOGENOM" id="CLU_013181_2_1_6"/>
<dbReference type="UniPathway" id="UPA00060"/>
<dbReference type="Proteomes" id="UP000001730">
    <property type="component" value="Chromosome 1"/>
</dbReference>
<dbReference type="GO" id="GO:0005829">
    <property type="term" value="C:cytosol"/>
    <property type="evidence" value="ECO:0007669"/>
    <property type="project" value="TreeGrafter"/>
</dbReference>
<dbReference type="GO" id="GO:0051539">
    <property type="term" value="F:4 iron, 4 sulfur cluster binding"/>
    <property type="evidence" value="ECO:0007669"/>
    <property type="project" value="UniProtKB-KW"/>
</dbReference>
<dbReference type="GO" id="GO:0016830">
    <property type="term" value="F:carbon-carbon lyase activity"/>
    <property type="evidence" value="ECO:0007669"/>
    <property type="project" value="InterPro"/>
</dbReference>
<dbReference type="GO" id="GO:0008270">
    <property type="term" value="F:zinc ion binding"/>
    <property type="evidence" value="ECO:0007669"/>
    <property type="project" value="UniProtKB-UniRule"/>
</dbReference>
<dbReference type="GO" id="GO:0009228">
    <property type="term" value="P:thiamine biosynthetic process"/>
    <property type="evidence" value="ECO:0007669"/>
    <property type="project" value="UniProtKB-KW"/>
</dbReference>
<dbReference type="GO" id="GO:0009229">
    <property type="term" value="P:thiamine diphosphate biosynthetic process"/>
    <property type="evidence" value="ECO:0007669"/>
    <property type="project" value="UniProtKB-UniRule"/>
</dbReference>
<dbReference type="FunFam" id="3.20.20.540:FF:000001">
    <property type="entry name" value="Phosphomethylpyrimidine synthase"/>
    <property type="match status" value="1"/>
</dbReference>
<dbReference type="Gene3D" id="6.10.250.620">
    <property type="match status" value="1"/>
</dbReference>
<dbReference type="Gene3D" id="3.20.20.540">
    <property type="entry name" value="Radical SAM ThiC family, central domain"/>
    <property type="match status" value="1"/>
</dbReference>
<dbReference type="HAMAP" id="MF_00089">
    <property type="entry name" value="ThiC"/>
    <property type="match status" value="1"/>
</dbReference>
<dbReference type="InterPro" id="IPR037509">
    <property type="entry name" value="ThiC"/>
</dbReference>
<dbReference type="InterPro" id="IPR025747">
    <property type="entry name" value="ThiC-associated_dom"/>
</dbReference>
<dbReference type="InterPro" id="IPR038521">
    <property type="entry name" value="ThiC/Bza_core_dom"/>
</dbReference>
<dbReference type="InterPro" id="IPR002817">
    <property type="entry name" value="ThiC/BzaA/B"/>
</dbReference>
<dbReference type="NCBIfam" id="NF006763">
    <property type="entry name" value="PRK09284.1"/>
    <property type="match status" value="1"/>
</dbReference>
<dbReference type="NCBIfam" id="NF009895">
    <property type="entry name" value="PRK13352.1"/>
    <property type="match status" value="1"/>
</dbReference>
<dbReference type="NCBIfam" id="TIGR00190">
    <property type="entry name" value="thiC"/>
    <property type="match status" value="1"/>
</dbReference>
<dbReference type="PANTHER" id="PTHR30557:SF1">
    <property type="entry name" value="PHOSPHOMETHYLPYRIMIDINE SYNTHASE, CHLOROPLASTIC"/>
    <property type="match status" value="1"/>
</dbReference>
<dbReference type="PANTHER" id="PTHR30557">
    <property type="entry name" value="THIAMINE BIOSYNTHESIS PROTEIN THIC"/>
    <property type="match status" value="1"/>
</dbReference>
<dbReference type="Pfam" id="PF13667">
    <property type="entry name" value="ThiC-associated"/>
    <property type="match status" value="1"/>
</dbReference>
<dbReference type="Pfam" id="PF01964">
    <property type="entry name" value="ThiC_Rad_SAM"/>
    <property type="match status" value="1"/>
</dbReference>
<dbReference type="SFLD" id="SFLDF00407">
    <property type="entry name" value="phosphomethylpyrimidine_syntha"/>
    <property type="match status" value="1"/>
</dbReference>
<dbReference type="SFLD" id="SFLDG01114">
    <property type="entry name" value="phosphomethylpyrimidine_syntha"/>
    <property type="match status" value="1"/>
</dbReference>
<dbReference type="SFLD" id="SFLDS00113">
    <property type="entry name" value="Radical_SAM_Phosphomethylpyrim"/>
    <property type="match status" value="1"/>
</dbReference>
<proteinExistence type="inferred from homology"/>
<feature type="chain" id="PRO_1000093187" description="Phosphomethylpyrimidine synthase">
    <location>
        <begin position="1"/>
        <end position="648"/>
    </location>
</feature>
<feature type="binding site" evidence="1">
    <location>
        <position position="236"/>
    </location>
    <ligand>
        <name>substrate</name>
    </ligand>
</feature>
<feature type="binding site" evidence="1">
    <location>
        <position position="265"/>
    </location>
    <ligand>
        <name>substrate</name>
    </ligand>
</feature>
<feature type="binding site" evidence="1">
    <location>
        <position position="294"/>
    </location>
    <ligand>
        <name>substrate</name>
    </ligand>
</feature>
<feature type="binding site" evidence="1">
    <location>
        <position position="330"/>
    </location>
    <ligand>
        <name>substrate</name>
    </ligand>
</feature>
<feature type="binding site" evidence="1">
    <location>
        <begin position="350"/>
        <end position="352"/>
    </location>
    <ligand>
        <name>substrate</name>
    </ligand>
</feature>
<feature type="binding site" evidence="1">
    <location>
        <begin position="391"/>
        <end position="394"/>
    </location>
    <ligand>
        <name>substrate</name>
    </ligand>
</feature>
<feature type="binding site" evidence="1">
    <location>
        <position position="430"/>
    </location>
    <ligand>
        <name>substrate</name>
    </ligand>
</feature>
<feature type="binding site" evidence="1">
    <location>
        <position position="434"/>
    </location>
    <ligand>
        <name>Zn(2+)</name>
        <dbReference type="ChEBI" id="CHEBI:29105"/>
    </ligand>
</feature>
<feature type="binding site" evidence="1">
    <location>
        <position position="457"/>
    </location>
    <ligand>
        <name>substrate</name>
    </ligand>
</feature>
<feature type="binding site" evidence="1">
    <location>
        <position position="498"/>
    </location>
    <ligand>
        <name>Zn(2+)</name>
        <dbReference type="ChEBI" id="CHEBI:29105"/>
    </ligand>
</feature>
<feature type="binding site" evidence="1">
    <location>
        <position position="578"/>
    </location>
    <ligand>
        <name>[4Fe-4S] cluster</name>
        <dbReference type="ChEBI" id="CHEBI:49883"/>
        <note>4Fe-4S-S-AdoMet</note>
    </ligand>
</feature>
<feature type="binding site" evidence="1">
    <location>
        <position position="581"/>
    </location>
    <ligand>
        <name>[4Fe-4S] cluster</name>
        <dbReference type="ChEBI" id="CHEBI:49883"/>
        <note>4Fe-4S-S-AdoMet</note>
    </ligand>
</feature>
<feature type="binding site" evidence="1">
    <location>
        <position position="586"/>
    </location>
    <ligand>
        <name>[4Fe-4S] cluster</name>
        <dbReference type="ChEBI" id="CHEBI:49883"/>
        <note>4Fe-4S-S-AdoMet</note>
    </ligand>
</feature>
<keyword id="KW-0004">4Fe-4S</keyword>
<keyword id="KW-0408">Iron</keyword>
<keyword id="KW-0411">Iron-sulfur</keyword>
<keyword id="KW-0456">Lyase</keyword>
<keyword id="KW-0479">Metal-binding</keyword>
<keyword id="KW-0949">S-adenosyl-L-methionine</keyword>
<keyword id="KW-0784">Thiamine biosynthesis</keyword>
<keyword id="KW-0862">Zinc</keyword>
<protein>
    <recommendedName>
        <fullName evidence="1">Phosphomethylpyrimidine synthase</fullName>
        <ecNumber evidence="1">4.1.99.17</ecNumber>
    </recommendedName>
    <alternativeName>
        <fullName evidence="1">Hydroxymethylpyrimidine phosphate synthase</fullName>
        <shortName evidence="1">HMP-P synthase</shortName>
        <shortName evidence="1">HMP-phosphate synthase</shortName>
        <shortName evidence="1">HMPP synthase</shortName>
    </alternativeName>
    <alternativeName>
        <fullName evidence="1">Thiamine biosynthesis protein ThiC</fullName>
    </alternativeName>
</protein>